<name>RNY1A_CANAL</name>
<accession>Q5AK94</accession>
<accession>A0A1D8PNY7</accession>
<proteinExistence type="inferred from homology"/>
<reference key="1">
    <citation type="journal article" date="2004" name="Proc. Natl. Acad. Sci. U.S.A.">
        <title>The diploid genome sequence of Candida albicans.</title>
        <authorList>
            <person name="Jones T."/>
            <person name="Federspiel N.A."/>
            <person name="Chibana H."/>
            <person name="Dungan J."/>
            <person name="Kalman S."/>
            <person name="Magee B.B."/>
            <person name="Newport G."/>
            <person name="Thorstenson Y.R."/>
            <person name="Agabian N."/>
            <person name="Magee P.T."/>
            <person name="Davis R.W."/>
            <person name="Scherer S."/>
        </authorList>
    </citation>
    <scope>NUCLEOTIDE SEQUENCE [LARGE SCALE GENOMIC DNA]</scope>
    <source>
        <strain>SC5314 / ATCC MYA-2876</strain>
    </source>
</reference>
<reference key="2">
    <citation type="journal article" date="2007" name="Genome Biol.">
        <title>Assembly of the Candida albicans genome into sixteen supercontigs aligned on the eight chromosomes.</title>
        <authorList>
            <person name="van het Hoog M."/>
            <person name="Rast T.J."/>
            <person name="Martchenko M."/>
            <person name="Grindle S."/>
            <person name="Dignard D."/>
            <person name="Hogues H."/>
            <person name="Cuomo C."/>
            <person name="Berriman M."/>
            <person name="Scherer S."/>
            <person name="Magee B.B."/>
            <person name="Whiteway M."/>
            <person name="Chibana H."/>
            <person name="Nantel A."/>
            <person name="Magee P.T."/>
        </authorList>
    </citation>
    <scope>GENOME REANNOTATION</scope>
    <source>
        <strain>SC5314 / ATCC MYA-2876</strain>
    </source>
</reference>
<reference key="3">
    <citation type="journal article" date="2013" name="Genome Biol.">
        <title>Assembly of a phased diploid Candida albicans genome facilitates allele-specific measurements and provides a simple model for repeat and indel structure.</title>
        <authorList>
            <person name="Muzzey D."/>
            <person name="Schwartz K."/>
            <person name="Weissman J.S."/>
            <person name="Sherlock G."/>
        </authorList>
    </citation>
    <scope>NUCLEOTIDE SEQUENCE [LARGE SCALE GENOMIC DNA]</scope>
    <scope>GENOME REANNOTATION</scope>
    <source>
        <strain>SC5314 / ATCC MYA-2876</strain>
    </source>
</reference>
<protein>
    <recommendedName>
        <fullName>Ribonuclease T2-like 1-A</fullName>
        <shortName>RNase T2-like A</shortName>
        <ecNumber>4.6.1.19</ecNumber>
    </recommendedName>
</protein>
<feature type="signal peptide" evidence="2">
    <location>
        <begin position="1"/>
        <end position="17"/>
    </location>
</feature>
<feature type="chain" id="PRO_0000043251" description="Ribonuclease T2-like 1-A">
    <location>
        <begin position="18"/>
        <end position="399"/>
    </location>
</feature>
<feature type="region of interest" description="Disordered" evidence="4">
    <location>
        <begin position="259"/>
        <end position="279"/>
    </location>
</feature>
<feature type="compositionally biased region" description="Low complexity" evidence="4">
    <location>
        <begin position="262"/>
        <end position="279"/>
    </location>
</feature>
<feature type="active site" evidence="3">
    <location>
        <position position="72"/>
    </location>
</feature>
<feature type="active site" evidence="3">
    <location>
        <position position="135"/>
    </location>
</feature>
<feature type="active site" evidence="3">
    <location>
        <position position="139"/>
    </location>
</feature>
<feature type="glycosylation site" description="N-linked (GlcNAc...) asparagine" evidence="2">
    <location>
        <position position="291"/>
    </location>
</feature>
<feature type="disulfide bond" evidence="1">
    <location>
        <begin position="24"/>
        <end position="43"/>
    </location>
</feature>
<feature type="disulfide bond" evidence="1">
    <location>
        <begin position="32"/>
        <end position="79"/>
    </location>
</feature>
<feature type="disulfide bond" evidence="1">
    <location>
        <begin position="42"/>
        <end position="150"/>
    </location>
</feature>
<feature type="disulfide bond" evidence="1">
    <location>
        <begin position="87"/>
        <end position="142"/>
    </location>
</feature>
<feature type="disulfide bond" evidence="1">
    <location>
        <begin position="214"/>
        <end position="249"/>
    </location>
</feature>
<comment type="function">
    <text evidence="1">Rnase which modulates cell survival under stress conditions. Released from the vacuole to the cytoplasm during stress to promote tRNA and rRNA cleavage and to activate separately a downstream pathway that promotes cell death. Involved in cell size, vacuolar morphology and growth at high temperatures and high salt concentration (By similarity).</text>
</comment>
<comment type="catalytic activity">
    <reaction evidence="3">
        <text>a ribonucleotidyl-ribonucleotide-RNA + H2O = a 3'-end 3'-phospho-ribonucleotide-RNA + a 5'-end dephospho-ribonucleoside-RNA + H(+)</text>
        <dbReference type="Rhea" id="RHEA:68052"/>
        <dbReference type="Rhea" id="RHEA-COMP:10463"/>
        <dbReference type="Rhea" id="RHEA-COMP:13936"/>
        <dbReference type="Rhea" id="RHEA-COMP:17355"/>
        <dbReference type="ChEBI" id="CHEBI:15377"/>
        <dbReference type="ChEBI" id="CHEBI:15378"/>
        <dbReference type="ChEBI" id="CHEBI:83062"/>
        <dbReference type="ChEBI" id="CHEBI:138284"/>
        <dbReference type="ChEBI" id="CHEBI:173118"/>
        <dbReference type="EC" id="4.6.1.19"/>
    </reaction>
</comment>
<comment type="subcellular location">
    <subcellularLocation>
        <location>Vacuole lumen</location>
    </subcellularLocation>
    <subcellularLocation>
        <location>Cytoplasm</location>
    </subcellularLocation>
    <text evidence="1">Is released from the vacuole to the cytoplasm during stress conditions like oxidative stress or stationary phase stress.</text>
</comment>
<comment type="similarity">
    <text evidence="5">Belongs to the RNase T2 family.</text>
</comment>
<sequence length="399" mass="42733">MLSILSIAALLIATVQAADFSSSCPIDSPISCSSNGDTSNSCCYENPGGIILFTQFWDYNPASGPADSFTIHSIWNDYCSGGYPQFCDTSLEIDSTGSTIESIVVDQFGDQTLYDNMNKYWTDINGNNKKFWAHEFNKHGTCLNTLNPSCYSNYKQNENVYDYYSLVYQLFQKLPTYQWLVSAGIKPSTTATYTLSQIQSALKSKFGAEVYIACDSNNAINEVWYFYNIKGSILQQNYLPIDTVSKTNCPSSGIKFPPKGNSGANTLTTKTTGTTTSGSGSTSVPATSYINLTGKSGCLISNGKYYTSGTCATYHFNAGSSGNTQITSSKGNCGIDSSNQFTCSSSTSATDFQVSGGSIGYNGNFDWCLGAVTGSGSTAQTSVKLSDGSCSSFKLTLSS</sequence>
<gene>
    <name type="primary">RNY1-A</name>
    <name type="ordered locus">CAALFM_C504400WA</name>
    <name type="ORF">CaO19.11408</name>
    <name type="ORF">CaO19.3926</name>
</gene>
<evidence type="ECO:0000250" key="1"/>
<evidence type="ECO:0000255" key="2"/>
<evidence type="ECO:0000255" key="3">
    <source>
        <dbReference type="PROSITE-ProRule" id="PRU10046"/>
    </source>
</evidence>
<evidence type="ECO:0000256" key="4">
    <source>
        <dbReference type="SAM" id="MobiDB-lite"/>
    </source>
</evidence>
<evidence type="ECO:0000305" key="5"/>
<dbReference type="EC" id="4.6.1.19"/>
<dbReference type="EMBL" id="CP017627">
    <property type="protein sequence ID" value="AOW29848.1"/>
    <property type="molecule type" value="Genomic_DNA"/>
</dbReference>
<dbReference type="SMR" id="Q5AK94"/>
<dbReference type="FunCoup" id="Q5AK94">
    <property type="interactions" value="157"/>
</dbReference>
<dbReference type="STRING" id="237561.Q5AK94"/>
<dbReference type="GlyCosmos" id="Q5AK94">
    <property type="glycosylation" value="1 site, No reported glycans"/>
</dbReference>
<dbReference type="EnsemblFungi" id="C5_04400W_A-T">
    <property type="protein sequence ID" value="C5_04400W_A-T-p1"/>
    <property type="gene ID" value="C5_04400W_A"/>
</dbReference>
<dbReference type="KEGG" id="cal:CAALFM_C504400WA"/>
<dbReference type="CGD" id="CAL0000196842">
    <property type="gene designation" value="RNY11"/>
</dbReference>
<dbReference type="VEuPathDB" id="FungiDB:C5_04400W_A"/>
<dbReference type="eggNOG" id="KOG1642">
    <property type="taxonomic scope" value="Eukaryota"/>
</dbReference>
<dbReference type="HOGENOM" id="CLU_037966_0_1_1"/>
<dbReference type="InParanoid" id="Q5AK94"/>
<dbReference type="OMA" id="HESLWIH"/>
<dbReference type="OrthoDB" id="435754at2759"/>
<dbReference type="PRO" id="PR:Q5AK94"/>
<dbReference type="Proteomes" id="UP000000559">
    <property type="component" value="Chromosome 5"/>
</dbReference>
<dbReference type="GO" id="GO:0005576">
    <property type="term" value="C:extracellular region"/>
    <property type="evidence" value="ECO:0000318"/>
    <property type="project" value="GO_Central"/>
</dbReference>
<dbReference type="GO" id="GO:0005775">
    <property type="term" value="C:vacuolar lumen"/>
    <property type="evidence" value="ECO:0007669"/>
    <property type="project" value="UniProtKB-SubCell"/>
</dbReference>
<dbReference type="GO" id="GO:0033897">
    <property type="term" value="F:ribonuclease T2 activity"/>
    <property type="evidence" value="ECO:0007669"/>
    <property type="project" value="UniProtKB-EC"/>
</dbReference>
<dbReference type="GO" id="GO:0003723">
    <property type="term" value="F:RNA binding"/>
    <property type="evidence" value="ECO:0007669"/>
    <property type="project" value="InterPro"/>
</dbReference>
<dbReference type="GO" id="GO:0004521">
    <property type="term" value="F:RNA endonuclease activity"/>
    <property type="evidence" value="ECO:0000318"/>
    <property type="project" value="GO_Central"/>
</dbReference>
<dbReference type="GO" id="GO:0006401">
    <property type="term" value="P:RNA catabolic process"/>
    <property type="evidence" value="ECO:0000318"/>
    <property type="project" value="GO_Central"/>
</dbReference>
<dbReference type="CDD" id="cd01061">
    <property type="entry name" value="RNase_T2_euk"/>
    <property type="match status" value="1"/>
</dbReference>
<dbReference type="FunFam" id="3.90.730.10:FF:000004">
    <property type="entry name" value="Ribonuclease T2-like"/>
    <property type="match status" value="1"/>
</dbReference>
<dbReference type="Gene3D" id="3.90.730.10">
    <property type="entry name" value="Ribonuclease T2-like"/>
    <property type="match status" value="1"/>
</dbReference>
<dbReference type="InterPro" id="IPR033697">
    <property type="entry name" value="Ribonuclease_T2_eukaryotic"/>
</dbReference>
<dbReference type="InterPro" id="IPR001568">
    <property type="entry name" value="RNase_T2-like"/>
</dbReference>
<dbReference type="InterPro" id="IPR036430">
    <property type="entry name" value="RNase_T2-like_sf"/>
</dbReference>
<dbReference type="InterPro" id="IPR033130">
    <property type="entry name" value="RNase_T2_His_AS_2"/>
</dbReference>
<dbReference type="PANTHER" id="PTHR11240">
    <property type="entry name" value="RIBONUCLEASE T2"/>
    <property type="match status" value="1"/>
</dbReference>
<dbReference type="PANTHER" id="PTHR11240:SF22">
    <property type="entry name" value="RIBONUCLEASE T2"/>
    <property type="match status" value="1"/>
</dbReference>
<dbReference type="Pfam" id="PF00445">
    <property type="entry name" value="Ribonuclease_T2"/>
    <property type="match status" value="1"/>
</dbReference>
<dbReference type="Pfam" id="PF25488">
    <property type="entry name" value="RNaseT2L_C"/>
    <property type="match status" value="1"/>
</dbReference>
<dbReference type="SUPFAM" id="SSF55895">
    <property type="entry name" value="Ribonuclease Rh-like"/>
    <property type="match status" value="1"/>
</dbReference>
<dbReference type="PROSITE" id="PS00531">
    <property type="entry name" value="RNASE_T2_2"/>
    <property type="match status" value="1"/>
</dbReference>
<organism>
    <name type="scientific">Candida albicans (strain SC5314 / ATCC MYA-2876)</name>
    <name type="common">Yeast</name>
    <dbReference type="NCBI Taxonomy" id="237561"/>
    <lineage>
        <taxon>Eukaryota</taxon>
        <taxon>Fungi</taxon>
        <taxon>Dikarya</taxon>
        <taxon>Ascomycota</taxon>
        <taxon>Saccharomycotina</taxon>
        <taxon>Pichiomycetes</taxon>
        <taxon>Debaryomycetaceae</taxon>
        <taxon>Candida/Lodderomyces clade</taxon>
        <taxon>Candida</taxon>
    </lineage>
</organism>
<keyword id="KW-0963">Cytoplasm</keyword>
<keyword id="KW-1015">Disulfide bond</keyword>
<keyword id="KW-0255">Endonuclease</keyword>
<keyword id="KW-0325">Glycoprotein</keyword>
<keyword id="KW-0378">Hydrolase</keyword>
<keyword id="KW-0456">Lyase</keyword>
<keyword id="KW-0540">Nuclease</keyword>
<keyword id="KW-1185">Reference proteome</keyword>
<keyword id="KW-0732">Signal</keyword>
<keyword id="KW-0926">Vacuole</keyword>